<proteinExistence type="evidence at transcript level"/>
<evidence type="ECO:0000250" key="1"/>
<evidence type="ECO:0000255" key="2"/>
<evidence type="ECO:0000305" key="3"/>
<feature type="chain" id="PRO_0000392018" description="CDGSH iron-sulfur domain-containing protein 2">
    <location>
        <begin position="1"/>
        <end position="135"/>
    </location>
</feature>
<feature type="topological domain" description="Lumenal" evidence="2">
    <location>
        <begin position="1"/>
        <end position="37"/>
    </location>
</feature>
<feature type="transmembrane region" description="Helical" evidence="2">
    <location>
        <begin position="38"/>
        <end position="60"/>
    </location>
</feature>
<feature type="topological domain" description="Cytoplasmic" evidence="2">
    <location>
        <begin position="61"/>
        <end position="135"/>
    </location>
</feature>
<feature type="binding site" evidence="1">
    <location>
        <position position="99"/>
    </location>
    <ligand>
        <name>[2Fe-2S] cluster</name>
        <dbReference type="ChEBI" id="CHEBI:190135"/>
    </ligand>
</feature>
<feature type="binding site" evidence="1">
    <location>
        <position position="101"/>
    </location>
    <ligand>
        <name>[2Fe-2S] cluster</name>
        <dbReference type="ChEBI" id="CHEBI:190135"/>
    </ligand>
</feature>
<feature type="binding site" evidence="1">
    <location>
        <position position="110"/>
    </location>
    <ligand>
        <name>[2Fe-2S] cluster</name>
        <dbReference type="ChEBI" id="CHEBI:190135"/>
    </ligand>
</feature>
<feature type="binding site" evidence="1">
    <location>
        <position position="114"/>
    </location>
    <ligand>
        <name>[2Fe-2S] cluster</name>
        <dbReference type="ChEBI" id="CHEBI:190135"/>
    </ligand>
</feature>
<accession>C1C524</accession>
<sequence>MVLEILARVIKVQLPAYLKRLPVPDSIAGFIRLTVSEWLRLLPFLGVLALLGYLAIRPFLPKKKQQKDSLINLKIQKENPKVVNEIDIEDLRIAKVAYCRCWRSKTFPVCDGSHNKHNELTGDNVGPLILKKKEV</sequence>
<comment type="function">
    <text evidence="1">Regulator of autophagy that contributes to antagonize becn1-mediated cellular autophagy at the endoplasmic reticulum. Participates in the interaction of bcl2 with becn1 and is required for bcl2-mediated depression of endoplasmic reticulum Ca(2+) stores during autophagy (By similarity).</text>
</comment>
<comment type="cofactor">
    <cofactor evidence="1">
        <name>[2Fe-2S] cluster</name>
        <dbReference type="ChEBI" id="CHEBI:190135"/>
    </cofactor>
    <text evidence="1">Binds 1 [2Fe-2S] cluster.</text>
</comment>
<comment type="subunit">
    <text evidence="1">Homodimer.</text>
</comment>
<comment type="subcellular location">
    <subcellularLocation>
        <location evidence="1">Endoplasmic reticulum membrane</location>
        <topology evidence="1">Single-pass membrane protein</topology>
    </subcellularLocation>
    <subcellularLocation>
        <location evidence="1">Mitochondrion outer membrane</location>
        <topology evidence="1">Single-pass membrane protein</topology>
    </subcellularLocation>
</comment>
<comment type="similarity">
    <text evidence="3">Belongs to the CISD protein family. CISD2 subfamily.</text>
</comment>
<protein>
    <recommendedName>
        <fullName>CDGSH iron-sulfur domain-containing protein 2</fullName>
    </recommendedName>
</protein>
<dbReference type="EMBL" id="BT081953">
    <property type="protein sequence ID" value="ACO52084.1"/>
    <property type="molecule type" value="mRNA"/>
</dbReference>
<dbReference type="SMR" id="C1C524"/>
<dbReference type="GO" id="GO:0005789">
    <property type="term" value="C:endoplasmic reticulum membrane"/>
    <property type="evidence" value="ECO:0000250"/>
    <property type="project" value="UniProtKB"/>
</dbReference>
<dbReference type="GO" id="GO:0005741">
    <property type="term" value="C:mitochondrial outer membrane"/>
    <property type="evidence" value="ECO:0000250"/>
    <property type="project" value="UniProtKB"/>
</dbReference>
<dbReference type="GO" id="GO:0051537">
    <property type="term" value="F:2 iron, 2 sulfur cluster binding"/>
    <property type="evidence" value="ECO:0000250"/>
    <property type="project" value="UniProtKB"/>
</dbReference>
<dbReference type="GO" id="GO:0046872">
    <property type="term" value="F:metal ion binding"/>
    <property type="evidence" value="ECO:0007669"/>
    <property type="project" value="UniProtKB-KW"/>
</dbReference>
<dbReference type="GO" id="GO:0042803">
    <property type="term" value="F:protein homodimerization activity"/>
    <property type="evidence" value="ECO:0000250"/>
    <property type="project" value="UniProtKB"/>
</dbReference>
<dbReference type="GO" id="GO:0000422">
    <property type="term" value="P:autophagy of mitochondrion"/>
    <property type="evidence" value="ECO:0000250"/>
    <property type="project" value="UniProtKB"/>
</dbReference>
<dbReference type="GO" id="GO:0010506">
    <property type="term" value="P:regulation of autophagy"/>
    <property type="evidence" value="ECO:0000250"/>
    <property type="project" value="UniProtKB"/>
</dbReference>
<dbReference type="FunFam" id="3.40.5.90:FF:000001">
    <property type="entry name" value="CDGSH iron-sulfur domain-containing protein 1"/>
    <property type="match status" value="1"/>
</dbReference>
<dbReference type="Gene3D" id="3.40.5.90">
    <property type="entry name" value="CDGSH iron-sulfur domain, mitoNEET-type"/>
    <property type="match status" value="1"/>
</dbReference>
<dbReference type="InterPro" id="IPR045131">
    <property type="entry name" value="CISD1/2"/>
</dbReference>
<dbReference type="InterPro" id="IPR018967">
    <property type="entry name" value="FeS-contain_CDGSH-typ"/>
</dbReference>
<dbReference type="InterPro" id="IPR019610">
    <property type="entry name" value="FeS-contain_mitoNEET_N"/>
</dbReference>
<dbReference type="InterPro" id="IPR042216">
    <property type="entry name" value="MitoNEET_CISD"/>
</dbReference>
<dbReference type="PANTHER" id="PTHR13680">
    <property type="entry name" value="CDGSH IRON-SULFUR DOMAIN-CONTAINING PROTEIN 1"/>
    <property type="match status" value="1"/>
</dbReference>
<dbReference type="PANTHER" id="PTHR13680:SF33">
    <property type="entry name" value="CDGSH IRON-SULFUR DOMAIN-CONTAINING PROTEIN 2"/>
    <property type="match status" value="1"/>
</dbReference>
<dbReference type="Pfam" id="PF10660">
    <property type="entry name" value="MitoNEET_N"/>
    <property type="match status" value="1"/>
</dbReference>
<dbReference type="Pfam" id="PF09360">
    <property type="entry name" value="zf-CDGSH"/>
    <property type="match status" value="1"/>
</dbReference>
<dbReference type="SMART" id="SM00704">
    <property type="entry name" value="ZnF_CDGSH"/>
    <property type="match status" value="1"/>
</dbReference>
<name>CISD2_AQUCT</name>
<reference key="1">
    <citation type="submission" date="2009-04" db="EMBL/GenBank/DDBJ databases">
        <title>Rana catesbeiana ESTs and full-length cDNAs.</title>
        <authorList>
            <person name="Helbing C.C."/>
            <person name="Veldhoen N."/>
            <person name="Leong J."/>
            <person name="Koop B.F."/>
        </authorList>
    </citation>
    <scope>NUCLEOTIDE SEQUENCE [LARGE SCALE MRNA]</scope>
</reference>
<gene>
    <name type="primary">cisd2</name>
</gene>
<organism>
    <name type="scientific">Aquarana catesbeiana</name>
    <name type="common">American bullfrog</name>
    <name type="synonym">Rana catesbeiana</name>
    <dbReference type="NCBI Taxonomy" id="8400"/>
    <lineage>
        <taxon>Eukaryota</taxon>
        <taxon>Metazoa</taxon>
        <taxon>Chordata</taxon>
        <taxon>Craniata</taxon>
        <taxon>Vertebrata</taxon>
        <taxon>Euteleostomi</taxon>
        <taxon>Amphibia</taxon>
        <taxon>Batrachia</taxon>
        <taxon>Anura</taxon>
        <taxon>Neobatrachia</taxon>
        <taxon>Ranoidea</taxon>
        <taxon>Ranidae</taxon>
        <taxon>Aquarana</taxon>
    </lineage>
</organism>
<keyword id="KW-0001">2Fe-2S</keyword>
<keyword id="KW-0072">Autophagy</keyword>
<keyword id="KW-0256">Endoplasmic reticulum</keyword>
<keyword id="KW-0408">Iron</keyword>
<keyword id="KW-0411">Iron-sulfur</keyword>
<keyword id="KW-0472">Membrane</keyword>
<keyword id="KW-0479">Metal-binding</keyword>
<keyword id="KW-0496">Mitochondrion</keyword>
<keyword id="KW-1000">Mitochondrion outer membrane</keyword>
<keyword id="KW-0812">Transmembrane</keyword>
<keyword id="KW-1133">Transmembrane helix</keyword>